<reference key="1">
    <citation type="journal article" date="2006" name="Science">
        <title>Genomic islands and the ecology and evolution of Prochlorococcus.</title>
        <authorList>
            <person name="Coleman M.L."/>
            <person name="Sullivan M.B."/>
            <person name="Martiny A.C."/>
            <person name="Steglich C."/>
            <person name="Barry K."/>
            <person name="Delong E.F."/>
            <person name="Chisholm S.W."/>
        </authorList>
    </citation>
    <scope>NUCLEOTIDE SEQUENCE [LARGE SCALE GENOMIC DNA]</scope>
    <source>
        <strain>MIT 9312</strain>
    </source>
</reference>
<keyword id="KW-0028">Amino-acid biosynthesis</keyword>
<keyword id="KW-0100">Branched-chain amino acid biosynthesis</keyword>
<keyword id="KW-0460">Magnesium</keyword>
<keyword id="KW-0479">Metal-binding</keyword>
<keyword id="KW-0521">NADP</keyword>
<keyword id="KW-0560">Oxidoreductase</keyword>
<proteinExistence type="inferred from homology"/>
<comment type="function">
    <text evidence="1">Involved in the biosynthesis of branched-chain amino acids (BCAA). Catalyzes an alkyl-migration followed by a ketol-acid reduction of (S)-2-acetolactate (S2AL) to yield (R)-2,3-dihydroxy-isovalerate. In the isomerase reaction, S2AL is rearranged via a Mg-dependent methyl migration to produce 3-hydroxy-3-methyl-2-ketobutyrate (HMKB). In the reductase reaction, this 2-ketoacid undergoes a metal-dependent reduction by NADPH to yield (R)-2,3-dihydroxy-isovalerate.</text>
</comment>
<comment type="catalytic activity">
    <reaction evidence="1">
        <text>(2R)-2,3-dihydroxy-3-methylbutanoate + NADP(+) = (2S)-2-acetolactate + NADPH + H(+)</text>
        <dbReference type="Rhea" id="RHEA:22068"/>
        <dbReference type="ChEBI" id="CHEBI:15378"/>
        <dbReference type="ChEBI" id="CHEBI:49072"/>
        <dbReference type="ChEBI" id="CHEBI:57783"/>
        <dbReference type="ChEBI" id="CHEBI:58349"/>
        <dbReference type="ChEBI" id="CHEBI:58476"/>
        <dbReference type="EC" id="1.1.1.86"/>
    </reaction>
</comment>
<comment type="catalytic activity">
    <reaction evidence="1">
        <text>(2R,3R)-2,3-dihydroxy-3-methylpentanoate + NADP(+) = (S)-2-ethyl-2-hydroxy-3-oxobutanoate + NADPH + H(+)</text>
        <dbReference type="Rhea" id="RHEA:13493"/>
        <dbReference type="ChEBI" id="CHEBI:15378"/>
        <dbReference type="ChEBI" id="CHEBI:49256"/>
        <dbReference type="ChEBI" id="CHEBI:49258"/>
        <dbReference type="ChEBI" id="CHEBI:57783"/>
        <dbReference type="ChEBI" id="CHEBI:58349"/>
        <dbReference type="EC" id="1.1.1.86"/>
    </reaction>
</comment>
<comment type="cofactor">
    <cofactor evidence="1">
        <name>Mg(2+)</name>
        <dbReference type="ChEBI" id="CHEBI:18420"/>
    </cofactor>
    <text evidence="1">Binds 2 magnesium ions per subunit.</text>
</comment>
<comment type="pathway">
    <text evidence="1">Amino-acid biosynthesis; L-isoleucine biosynthesis; L-isoleucine from 2-oxobutanoate: step 2/4.</text>
</comment>
<comment type="pathway">
    <text evidence="1">Amino-acid biosynthesis; L-valine biosynthesis; L-valine from pyruvate: step 2/4.</text>
</comment>
<comment type="similarity">
    <text evidence="1">Belongs to the ketol-acid reductoisomerase family.</text>
</comment>
<sequence>MTQLFYDTDADLSLLNKKTIAIIGYGSQGHAHALNLKDSGMDVIVGLYKGSKSEGKAVSDGLKVFSVSEACEKADWIMILLPDEFQKDVYLKEIEPNLKEGKILSFAHGFNIRFGLIKPPSFVDVVMIAPKGPGHTVRWEYQNGQGVPALFAVEQDSSGNARSLAMAYAKGIGGTRAGILETNFKEETETDLFGEQAVLCGGLSELVKSGFETLVEAGYQPELAYFECLHEVKLIVDLMVKGGLSQMRDSISNTAEYGDYVSGKRLINSDTKKEMQKILKDIQDGTFAKNFVEECDKNKPLMTKLREENSKHEIEKVGKGLRSMFSWLK</sequence>
<gene>
    <name evidence="1" type="primary">ilvC</name>
    <name type="ordered locus">PMT9312_1412</name>
</gene>
<organism>
    <name type="scientific">Prochlorococcus marinus (strain MIT 9312)</name>
    <dbReference type="NCBI Taxonomy" id="74546"/>
    <lineage>
        <taxon>Bacteria</taxon>
        <taxon>Bacillati</taxon>
        <taxon>Cyanobacteriota</taxon>
        <taxon>Cyanophyceae</taxon>
        <taxon>Synechococcales</taxon>
        <taxon>Prochlorococcaceae</taxon>
        <taxon>Prochlorococcus</taxon>
    </lineage>
</organism>
<dbReference type="EC" id="1.1.1.86" evidence="1"/>
<dbReference type="EMBL" id="CP000111">
    <property type="protein sequence ID" value="ABB50472.1"/>
    <property type="molecule type" value="Genomic_DNA"/>
</dbReference>
<dbReference type="RefSeq" id="WP_011376957.1">
    <property type="nucleotide sequence ID" value="NC_007577.1"/>
</dbReference>
<dbReference type="SMR" id="Q319H3"/>
<dbReference type="STRING" id="74546.PMT9312_1412"/>
<dbReference type="KEGG" id="pmi:PMT9312_1412"/>
<dbReference type="eggNOG" id="COG0059">
    <property type="taxonomic scope" value="Bacteria"/>
</dbReference>
<dbReference type="HOGENOM" id="CLU_033821_0_1_3"/>
<dbReference type="OrthoDB" id="9804088at2"/>
<dbReference type="UniPathway" id="UPA00047">
    <property type="reaction ID" value="UER00056"/>
</dbReference>
<dbReference type="UniPathway" id="UPA00049">
    <property type="reaction ID" value="UER00060"/>
</dbReference>
<dbReference type="Proteomes" id="UP000002715">
    <property type="component" value="Chromosome"/>
</dbReference>
<dbReference type="GO" id="GO:0005829">
    <property type="term" value="C:cytosol"/>
    <property type="evidence" value="ECO:0007669"/>
    <property type="project" value="TreeGrafter"/>
</dbReference>
<dbReference type="GO" id="GO:0004455">
    <property type="term" value="F:ketol-acid reductoisomerase activity"/>
    <property type="evidence" value="ECO:0007669"/>
    <property type="project" value="UniProtKB-UniRule"/>
</dbReference>
<dbReference type="GO" id="GO:0000287">
    <property type="term" value="F:magnesium ion binding"/>
    <property type="evidence" value="ECO:0007669"/>
    <property type="project" value="UniProtKB-UniRule"/>
</dbReference>
<dbReference type="GO" id="GO:0050661">
    <property type="term" value="F:NADP binding"/>
    <property type="evidence" value="ECO:0007669"/>
    <property type="project" value="InterPro"/>
</dbReference>
<dbReference type="GO" id="GO:0009097">
    <property type="term" value="P:isoleucine biosynthetic process"/>
    <property type="evidence" value="ECO:0007669"/>
    <property type="project" value="UniProtKB-UniRule"/>
</dbReference>
<dbReference type="GO" id="GO:0009099">
    <property type="term" value="P:L-valine biosynthetic process"/>
    <property type="evidence" value="ECO:0007669"/>
    <property type="project" value="UniProtKB-UniRule"/>
</dbReference>
<dbReference type="FunFam" id="3.40.50.720:FF:000023">
    <property type="entry name" value="Ketol-acid reductoisomerase (NADP(+))"/>
    <property type="match status" value="1"/>
</dbReference>
<dbReference type="Gene3D" id="6.10.240.10">
    <property type="match status" value="1"/>
</dbReference>
<dbReference type="Gene3D" id="3.40.50.720">
    <property type="entry name" value="NAD(P)-binding Rossmann-like Domain"/>
    <property type="match status" value="1"/>
</dbReference>
<dbReference type="HAMAP" id="MF_00435">
    <property type="entry name" value="IlvC"/>
    <property type="match status" value="1"/>
</dbReference>
<dbReference type="InterPro" id="IPR008927">
    <property type="entry name" value="6-PGluconate_DH-like_C_sf"/>
</dbReference>
<dbReference type="InterPro" id="IPR013023">
    <property type="entry name" value="KARI"/>
</dbReference>
<dbReference type="InterPro" id="IPR000506">
    <property type="entry name" value="KARI_C"/>
</dbReference>
<dbReference type="InterPro" id="IPR013116">
    <property type="entry name" value="KARI_N"/>
</dbReference>
<dbReference type="InterPro" id="IPR014359">
    <property type="entry name" value="KARI_prok"/>
</dbReference>
<dbReference type="InterPro" id="IPR036291">
    <property type="entry name" value="NAD(P)-bd_dom_sf"/>
</dbReference>
<dbReference type="NCBIfam" id="TIGR00465">
    <property type="entry name" value="ilvC"/>
    <property type="match status" value="1"/>
</dbReference>
<dbReference type="NCBIfam" id="NF004017">
    <property type="entry name" value="PRK05479.1"/>
    <property type="match status" value="1"/>
</dbReference>
<dbReference type="NCBIfam" id="NF009940">
    <property type="entry name" value="PRK13403.1"/>
    <property type="match status" value="1"/>
</dbReference>
<dbReference type="PANTHER" id="PTHR21371">
    <property type="entry name" value="KETOL-ACID REDUCTOISOMERASE, MITOCHONDRIAL"/>
    <property type="match status" value="1"/>
</dbReference>
<dbReference type="PANTHER" id="PTHR21371:SF1">
    <property type="entry name" value="KETOL-ACID REDUCTOISOMERASE, MITOCHONDRIAL"/>
    <property type="match status" value="1"/>
</dbReference>
<dbReference type="Pfam" id="PF01450">
    <property type="entry name" value="KARI_C"/>
    <property type="match status" value="1"/>
</dbReference>
<dbReference type="Pfam" id="PF07991">
    <property type="entry name" value="KARI_N"/>
    <property type="match status" value="1"/>
</dbReference>
<dbReference type="PIRSF" id="PIRSF000116">
    <property type="entry name" value="IlvC_gammaproteo"/>
    <property type="match status" value="1"/>
</dbReference>
<dbReference type="SUPFAM" id="SSF48179">
    <property type="entry name" value="6-phosphogluconate dehydrogenase C-terminal domain-like"/>
    <property type="match status" value="1"/>
</dbReference>
<dbReference type="SUPFAM" id="SSF51735">
    <property type="entry name" value="NAD(P)-binding Rossmann-fold domains"/>
    <property type="match status" value="1"/>
</dbReference>
<dbReference type="PROSITE" id="PS51851">
    <property type="entry name" value="KARI_C"/>
    <property type="match status" value="1"/>
</dbReference>
<dbReference type="PROSITE" id="PS51850">
    <property type="entry name" value="KARI_N"/>
    <property type="match status" value="1"/>
</dbReference>
<accession>Q319H3</accession>
<name>ILVC_PROM9</name>
<protein>
    <recommendedName>
        <fullName evidence="1">Ketol-acid reductoisomerase (NADP(+))</fullName>
        <shortName evidence="1">KARI</shortName>
        <ecNumber evidence="1">1.1.1.86</ecNumber>
    </recommendedName>
    <alternativeName>
        <fullName evidence="1">Acetohydroxy-acid isomeroreductase</fullName>
        <shortName evidence="1">AHIR</shortName>
    </alternativeName>
    <alternativeName>
        <fullName evidence="1">Alpha-keto-beta-hydroxylacyl reductoisomerase</fullName>
    </alternativeName>
    <alternativeName>
        <fullName evidence="1">Ketol-acid reductoisomerase type 1</fullName>
    </alternativeName>
    <alternativeName>
        <fullName evidence="1">Ketol-acid reductoisomerase type I</fullName>
    </alternativeName>
</protein>
<evidence type="ECO:0000255" key="1">
    <source>
        <dbReference type="HAMAP-Rule" id="MF_00435"/>
    </source>
</evidence>
<evidence type="ECO:0000255" key="2">
    <source>
        <dbReference type="PROSITE-ProRule" id="PRU01197"/>
    </source>
</evidence>
<evidence type="ECO:0000255" key="3">
    <source>
        <dbReference type="PROSITE-ProRule" id="PRU01198"/>
    </source>
</evidence>
<feature type="chain" id="PRO_0000252773" description="Ketol-acid reductoisomerase (NADP(+))">
    <location>
        <begin position="1"/>
        <end position="329"/>
    </location>
</feature>
<feature type="domain" description="KARI N-terminal Rossmann" evidence="2">
    <location>
        <begin position="2"/>
        <end position="182"/>
    </location>
</feature>
<feature type="domain" description="KARI C-terminal knotted" evidence="3">
    <location>
        <begin position="183"/>
        <end position="328"/>
    </location>
</feature>
<feature type="active site" evidence="1">
    <location>
        <position position="108"/>
    </location>
</feature>
<feature type="binding site" evidence="1">
    <location>
        <begin position="25"/>
        <end position="28"/>
    </location>
    <ligand>
        <name>NADP(+)</name>
        <dbReference type="ChEBI" id="CHEBI:58349"/>
    </ligand>
</feature>
<feature type="binding site" evidence="1">
    <location>
        <position position="51"/>
    </location>
    <ligand>
        <name>NADP(+)</name>
        <dbReference type="ChEBI" id="CHEBI:58349"/>
    </ligand>
</feature>
<feature type="binding site" evidence="1">
    <location>
        <position position="53"/>
    </location>
    <ligand>
        <name>NADP(+)</name>
        <dbReference type="ChEBI" id="CHEBI:58349"/>
    </ligand>
</feature>
<feature type="binding site" evidence="1">
    <location>
        <begin position="83"/>
        <end position="86"/>
    </location>
    <ligand>
        <name>NADP(+)</name>
        <dbReference type="ChEBI" id="CHEBI:58349"/>
    </ligand>
</feature>
<feature type="binding site" evidence="1">
    <location>
        <position position="134"/>
    </location>
    <ligand>
        <name>NADP(+)</name>
        <dbReference type="ChEBI" id="CHEBI:58349"/>
    </ligand>
</feature>
<feature type="binding site" evidence="1">
    <location>
        <position position="191"/>
    </location>
    <ligand>
        <name>Mg(2+)</name>
        <dbReference type="ChEBI" id="CHEBI:18420"/>
        <label>1</label>
    </ligand>
</feature>
<feature type="binding site" evidence="1">
    <location>
        <position position="191"/>
    </location>
    <ligand>
        <name>Mg(2+)</name>
        <dbReference type="ChEBI" id="CHEBI:18420"/>
        <label>2</label>
    </ligand>
</feature>
<feature type="binding site" evidence="1">
    <location>
        <position position="195"/>
    </location>
    <ligand>
        <name>Mg(2+)</name>
        <dbReference type="ChEBI" id="CHEBI:18420"/>
        <label>1</label>
    </ligand>
</feature>
<feature type="binding site" evidence="1">
    <location>
        <position position="227"/>
    </location>
    <ligand>
        <name>Mg(2+)</name>
        <dbReference type="ChEBI" id="CHEBI:18420"/>
        <label>2</label>
    </ligand>
</feature>
<feature type="binding site" evidence="1">
    <location>
        <position position="231"/>
    </location>
    <ligand>
        <name>Mg(2+)</name>
        <dbReference type="ChEBI" id="CHEBI:18420"/>
        <label>2</label>
    </ligand>
</feature>
<feature type="binding site" evidence="1">
    <location>
        <position position="252"/>
    </location>
    <ligand>
        <name>substrate</name>
    </ligand>
</feature>